<proteinExistence type="evidence at protein level"/>
<sequence>MEKKAKESLRRYKKAARHSATHSSSSDSTSDSDSGSSSYSSTDSEQGVGGVGVGVGVPGGAGGPGGSGSVHGHPHTHGHGHHPRSAERHHRKKKSSRRGGSSSGDEPSSSRRKRDKRDHVQKKLVAKRNHIKRKLKEARLKKRAAAALSGHVHRSLSPTTRAKLKKLAERKRLRAASKEQRERDKLRVVQRDRERDHHRLGSSRSPPSSSTTTTTKIRIHQDIVGKRQKSPGLGSGLGGGSSSSSSRMHHQLMSREKIIIQTRARGRTPSLERERERERERERERERERHDLSLRERDRRDRERERAEREAARDKERAEALARCQERQRERERLAREKLRRQEEEEGGKRGGPGRDLDLPPYGSRERSLDTVERERERERSGRHVRDKRELDPYEREQEYLEERHGHGLIDEMRRYRRRDLSPMPEHYAPRLRDPRELYSEEERERAYKRAYLDARYSSREREAWLEARELRERELQGREYRDLETEDTLYPDERERLIRDRERDRERERDRERERNIGPRGDFRPEWEREWEEEGAGGGPGGPSGTPGRPGGFVGGPKRGKPPAHAGGGPPSQQQHHSASEPDWDADERERERERERDRERERDREDRPDTGGGGAGGDRPSIKNEPAWLEHDQREKPRGWQQQSSNSGGDWRDNDDAPPAPSHPHPASPHHHVHPRGERGSGRGFRRGGHGHGDHGERPGYRSHPPPLMTLPVQPPGGYSRGFPHKRLPYGSGRDGAALGARDGGLPGSSTFLKKHTHAPLVSPTQTPLLNPLLNAAKPNAAAQASAVAAATTAVAAAKAAAQSAANATTNPGILAQVSKLNTVCIKQEDASEDSAGTPELGAQDSPTQSLNLNQSLSSEGNPVKQELIRTSAVEGELSEISDSDDDILNKTDKVRPKNELPTETEQEMDTNADEVKSEALHIVAGHPIKGEEGDEVLDFEEISDGELEEDARHKGIGDALGVDWQGLIAETRQQASDAQAAQQGVDRGTSAKQRWQPYRVLLDLGISFGMAGEGYARCVMEEARQQLLQEKEQGQQRELDGDEEPPAKIPSPLLDYREFLASQQQLEPLACVQMGLRSAAVERQRLVGNVCGPGSRALSARQDLRLRRQLCGLPARECEFPRSVPIVGEGLRNLAMQMFQRRLLDVK</sequence>
<dbReference type="EMBL" id="AE014298">
    <property type="protein sequence ID" value="AAF48904.1"/>
    <property type="molecule type" value="Genomic_DNA"/>
</dbReference>
<dbReference type="EMBL" id="AE014298">
    <property type="protein sequence ID" value="AHN59888.1"/>
    <property type="molecule type" value="Genomic_DNA"/>
</dbReference>
<dbReference type="EMBL" id="AE014298">
    <property type="protein sequence ID" value="AHN59889.1"/>
    <property type="molecule type" value="Genomic_DNA"/>
</dbReference>
<dbReference type="EMBL" id="AY128424">
    <property type="protein sequence ID" value="AAM75017.1"/>
    <property type="molecule type" value="mRNA"/>
</dbReference>
<dbReference type="RefSeq" id="NP_001285418.1">
    <molecule id="Q9VWN4-2"/>
    <property type="nucleotide sequence ID" value="NM_001298489.1"/>
</dbReference>
<dbReference type="RefSeq" id="NP_001285419.1">
    <molecule id="Q9VWN4-3"/>
    <property type="nucleotide sequence ID" value="NM_001298490.1"/>
</dbReference>
<dbReference type="RefSeq" id="NP_573339.1">
    <molecule id="Q9VWN4-1"/>
    <property type="nucleotide sequence ID" value="NM_133111.2"/>
</dbReference>
<dbReference type="ComplexPortal" id="CPX-2344">
    <property type="entry name" value="N6-methyladenosine methyltransferase complex"/>
</dbReference>
<dbReference type="FunCoup" id="Q9VWN4">
    <property type="interactions" value="232"/>
</dbReference>
<dbReference type="IntAct" id="Q9VWN4">
    <property type="interactions" value="10"/>
</dbReference>
<dbReference type="STRING" id="7227.FBpp0074423"/>
<dbReference type="GlyGen" id="Q9VWN4">
    <property type="glycosylation" value="1 site"/>
</dbReference>
<dbReference type="PaxDb" id="7227-FBpp0074423"/>
<dbReference type="DNASU" id="32886"/>
<dbReference type="EnsemblMetazoa" id="FBtr0074652">
    <molecule id="Q9VWN4-1"/>
    <property type="protein sequence ID" value="FBpp0074423"/>
    <property type="gene ID" value="FBgn0030974"/>
</dbReference>
<dbReference type="EnsemblMetazoa" id="FBtr0342879">
    <molecule id="Q9VWN4-2"/>
    <property type="protein sequence ID" value="FBpp0309680"/>
    <property type="gene ID" value="FBgn0030974"/>
</dbReference>
<dbReference type="EnsemblMetazoa" id="FBtr0342880">
    <molecule id="Q9VWN4-3"/>
    <property type="protein sequence ID" value="FBpp0309681"/>
    <property type="gene ID" value="FBgn0030974"/>
</dbReference>
<dbReference type="GeneID" id="32886"/>
<dbReference type="KEGG" id="dme:Dmel_CG7358"/>
<dbReference type="UCSC" id="CG7358-RA">
    <molecule id="Q9VWN4-1"/>
    <property type="organism name" value="d. melanogaster"/>
</dbReference>
<dbReference type="AGR" id="FB:FBgn0030974"/>
<dbReference type="CTD" id="32886"/>
<dbReference type="FlyBase" id="FBgn0030974">
    <property type="gene designation" value="Flacc"/>
</dbReference>
<dbReference type="VEuPathDB" id="VectorBase:FBgn0030974"/>
<dbReference type="eggNOG" id="KOG1874">
    <property type="taxonomic scope" value="Eukaryota"/>
</dbReference>
<dbReference type="HOGENOM" id="CLU_007189_0_0_1"/>
<dbReference type="InParanoid" id="Q9VWN4"/>
<dbReference type="OMA" id="EKDWPRN"/>
<dbReference type="OrthoDB" id="6022762at2759"/>
<dbReference type="PhylomeDB" id="Q9VWN4"/>
<dbReference type="SignaLink" id="Q9VWN4"/>
<dbReference type="BioGRID-ORCS" id="32886">
    <property type="hits" value="0 hits in 1 CRISPR screen"/>
</dbReference>
<dbReference type="GenomeRNAi" id="32886"/>
<dbReference type="PRO" id="PR:Q9VWN4"/>
<dbReference type="Proteomes" id="UP000000803">
    <property type="component" value="Chromosome X"/>
</dbReference>
<dbReference type="Bgee" id="FBgn0030974">
    <property type="expression patterns" value="Expressed in eye disc (Drosophila) and 204 other cell types or tissues"/>
</dbReference>
<dbReference type="ExpressionAtlas" id="Q9VWN4">
    <property type="expression patterns" value="baseline and differential"/>
</dbReference>
<dbReference type="GO" id="GO:0005634">
    <property type="term" value="C:nucleus"/>
    <property type="evidence" value="ECO:0000314"/>
    <property type="project" value="UniProtKB"/>
</dbReference>
<dbReference type="GO" id="GO:0036396">
    <property type="term" value="C:RNA N6-methyladenosine methyltransferase complex"/>
    <property type="evidence" value="ECO:0000314"/>
    <property type="project" value="UniProtKB"/>
</dbReference>
<dbReference type="GO" id="GO:0030154">
    <property type="term" value="P:cell differentiation"/>
    <property type="evidence" value="ECO:0007669"/>
    <property type="project" value="UniProtKB-KW"/>
</dbReference>
<dbReference type="GO" id="GO:0016556">
    <property type="term" value="P:mRNA modification"/>
    <property type="evidence" value="ECO:0007669"/>
    <property type="project" value="InterPro"/>
</dbReference>
<dbReference type="GO" id="GO:0006397">
    <property type="term" value="P:mRNA processing"/>
    <property type="evidence" value="ECO:0000315"/>
    <property type="project" value="UniProtKB"/>
</dbReference>
<dbReference type="GO" id="GO:0000381">
    <property type="term" value="P:regulation of alternative mRNA splicing, via spliceosome"/>
    <property type="evidence" value="ECO:0000314"/>
    <property type="project" value="UniProtKB"/>
</dbReference>
<dbReference type="GO" id="GO:0008380">
    <property type="term" value="P:RNA splicing"/>
    <property type="evidence" value="ECO:0007669"/>
    <property type="project" value="UniProtKB-KW"/>
</dbReference>
<dbReference type="GO" id="GO:0007530">
    <property type="term" value="P:sex determination"/>
    <property type="evidence" value="ECO:0000315"/>
    <property type="project" value="UniProtKB"/>
</dbReference>
<dbReference type="GO" id="GO:0007548">
    <property type="term" value="P:sex differentiation"/>
    <property type="evidence" value="ECO:0007669"/>
    <property type="project" value="UniProtKB-KW"/>
</dbReference>
<dbReference type="InterPro" id="IPR040427">
    <property type="entry name" value="Flacc"/>
</dbReference>
<dbReference type="PANTHER" id="PTHR38563">
    <property type="entry name" value="FL(2)D-ASSOCIATED COMPLEX COMPONENT"/>
    <property type="match status" value="1"/>
</dbReference>
<dbReference type="PANTHER" id="PTHR38563:SF1">
    <property type="entry name" value="FL(2)D-ASSOCIATED COMPLEX COMPONENT"/>
    <property type="match status" value="1"/>
</dbReference>
<reference key="1">
    <citation type="journal article" date="2000" name="Science">
        <title>The genome sequence of Drosophila melanogaster.</title>
        <authorList>
            <person name="Adams M.D."/>
            <person name="Celniker S.E."/>
            <person name="Holt R.A."/>
            <person name="Evans C.A."/>
            <person name="Gocayne J.D."/>
            <person name="Amanatides P.G."/>
            <person name="Scherer S.E."/>
            <person name="Li P.W."/>
            <person name="Hoskins R.A."/>
            <person name="Galle R.F."/>
            <person name="George R.A."/>
            <person name="Lewis S.E."/>
            <person name="Richards S."/>
            <person name="Ashburner M."/>
            <person name="Henderson S.N."/>
            <person name="Sutton G.G."/>
            <person name="Wortman J.R."/>
            <person name="Yandell M.D."/>
            <person name="Zhang Q."/>
            <person name="Chen L.X."/>
            <person name="Brandon R.C."/>
            <person name="Rogers Y.-H.C."/>
            <person name="Blazej R.G."/>
            <person name="Champe M."/>
            <person name="Pfeiffer B.D."/>
            <person name="Wan K.H."/>
            <person name="Doyle C."/>
            <person name="Baxter E.G."/>
            <person name="Helt G."/>
            <person name="Nelson C.R."/>
            <person name="Miklos G.L.G."/>
            <person name="Abril J.F."/>
            <person name="Agbayani A."/>
            <person name="An H.-J."/>
            <person name="Andrews-Pfannkoch C."/>
            <person name="Baldwin D."/>
            <person name="Ballew R.M."/>
            <person name="Basu A."/>
            <person name="Baxendale J."/>
            <person name="Bayraktaroglu L."/>
            <person name="Beasley E.M."/>
            <person name="Beeson K.Y."/>
            <person name="Benos P.V."/>
            <person name="Berman B.P."/>
            <person name="Bhandari D."/>
            <person name="Bolshakov S."/>
            <person name="Borkova D."/>
            <person name="Botchan M.R."/>
            <person name="Bouck J."/>
            <person name="Brokstein P."/>
            <person name="Brottier P."/>
            <person name="Burtis K.C."/>
            <person name="Busam D.A."/>
            <person name="Butler H."/>
            <person name="Cadieu E."/>
            <person name="Center A."/>
            <person name="Chandra I."/>
            <person name="Cherry J.M."/>
            <person name="Cawley S."/>
            <person name="Dahlke C."/>
            <person name="Davenport L.B."/>
            <person name="Davies P."/>
            <person name="de Pablos B."/>
            <person name="Delcher A."/>
            <person name="Deng Z."/>
            <person name="Mays A.D."/>
            <person name="Dew I."/>
            <person name="Dietz S.M."/>
            <person name="Dodson K."/>
            <person name="Doup L.E."/>
            <person name="Downes M."/>
            <person name="Dugan-Rocha S."/>
            <person name="Dunkov B.C."/>
            <person name="Dunn P."/>
            <person name="Durbin K.J."/>
            <person name="Evangelista C.C."/>
            <person name="Ferraz C."/>
            <person name="Ferriera S."/>
            <person name="Fleischmann W."/>
            <person name="Fosler C."/>
            <person name="Gabrielian A.E."/>
            <person name="Garg N.S."/>
            <person name="Gelbart W.M."/>
            <person name="Glasser K."/>
            <person name="Glodek A."/>
            <person name="Gong F."/>
            <person name="Gorrell J.H."/>
            <person name="Gu Z."/>
            <person name="Guan P."/>
            <person name="Harris M."/>
            <person name="Harris N.L."/>
            <person name="Harvey D.A."/>
            <person name="Heiman T.J."/>
            <person name="Hernandez J.R."/>
            <person name="Houck J."/>
            <person name="Hostin D."/>
            <person name="Houston K.A."/>
            <person name="Howland T.J."/>
            <person name="Wei M.-H."/>
            <person name="Ibegwam C."/>
            <person name="Jalali M."/>
            <person name="Kalush F."/>
            <person name="Karpen G.H."/>
            <person name="Ke Z."/>
            <person name="Kennison J.A."/>
            <person name="Ketchum K.A."/>
            <person name="Kimmel B.E."/>
            <person name="Kodira C.D."/>
            <person name="Kraft C.L."/>
            <person name="Kravitz S."/>
            <person name="Kulp D."/>
            <person name="Lai Z."/>
            <person name="Lasko P."/>
            <person name="Lei Y."/>
            <person name="Levitsky A.A."/>
            <person name="Li J.H."/>
            <person name="Li Z."/>
            <person name="Liang Y."/>
            <person name="Lin X."/>
            <person name="Liu X."/>
            <person name="Mattei B."/>
            <person name="McIntosh T.C."/>
            <person name="McLeod M.P."/>
            <person name="McPherson D."/>
            <person name="Merkulov G."/>
            <person name="Milshina N.V."/>
            <person name="Mobarry C."/>
            <person name="Morris J."/>
            <person name="Moshrefi A."/>
            <person name="Mount S.M."/>
            <person name="Moy M."/>
            <person name="Murphy B."/>
            <person name="Murphy L."/>
            <person name="Muzny D.M."/>
            <person name="Nelson D.L."/>
            <person name="Nelson D.R."/>
            <person name="Nelson K.A."/>
            <person name="Nixon K."/>
            <person name="Nusskern D.R."/>
            <person name="Pacleb J.M."/>
            <person name="Palazzolo M."/>
            <person name="Pittman G.S."/>
            <person name="Pan S."/>
            <person name="Pollard J."/>
            <person name="Puri V."/>
            <person name="Reese M.G."/>
            <person name="Reinert K."/>
            <person name="Remington K."/>
            <person name="Saunders R.D.C."/>
            <person name="Scheeler F."/>
            <person name="Shen H."/>
            <person name="Shue B.C."/>
            <person name="Siden-Kiamos I."/>
            <person name="Simpson M."/>
            <person name="Skupski M.P."/>
            <person name="Smith T.J."/>
            <person name="Spier E."/>
            <person name="Spradling A.C."/>
            <person name="Stapleton M."/>
            <person name="Strong R."/>
            <person name="Sun E."/>
            <person name="Svirskas R."/>
            <person name="Tector C."/>
            <person name="Turner R."/>
            <person name="Venter E."/>
            <person name="Wang A.H."/>
            <person name="Wang X."/>
            <person name="Wang Z.-Y."/>
            <person name="Wassarman D.A."/>
            <person name="Weinstock G.M."/>
            <person name="Weissenbach J."/>
            <person name="Williams S.M."/>
            <person name="Woodage T."/>
            <person name="Worley K.C."/>
            <person name="Wu D."/>
            <person name="Yang S."/>
            <person name="Yao Q.A."/>
            <person name="Ye J."/>
            <person name="Yeh R.-F."/>
            <person name="Zaveri J.S."/>
            <person name="Zhan M."/>
            <person name="Zhang G."/>
            <person name="Zhao Q."/>
            <person name="Zheng L."/>
            <person name="Zheng X.H."/>
            <person name="Zhong F.N."/>
            <person name="Zhong W."/>
            <person name="Zhou X."/>
            <person name="Zhu S.C."/>
            <person name="Zhu X."/>
            <person name="Smith H.O."/>
            <person name="Gibbs R.A."/>
            <person name="Myers E.W."/>
            <person name="Rubin G.M."/>
            <person name="Venter J.C."/>
        </authorList>
    </citation>
    <scope>NUCLEOTIDE SEQUENCE [LARGE SCALE GENOMIC DNA]</scope>
    <source>
        <strain>Berkeley</strain>
    </source>
</reference>
<reference key="2">
    <citation type="journal article" date="2002" name="Genome Biol.">
        <title>Annotation of the Drosophila melanogaster euchromatic genome: a systematic review.</title>
        <authorList>
            <person name="Misra S."/>
            <person name="Crosby M.A."/>
            <person name="Mungall C.J."/>
            <person name="Matthews B.B."/>
            <person name="Campbell K.S."/>
            <person name="Hradecky P."/>
            <person name="Huang Y."/>
            <person name="Kaminker J.S."/>
            <person name="Millburn G.H."/>
            <person name="Prochnik S.E."/>
            <person name="Smith C.D."/>
            <person name="Tupy J.L."/>
            <person name="Whitfield E.J."/>
            <person name="Bayraktaroglu L."/>
            <person name="Berman B.P."/>
            <person name="Bettencourt B.R."/>
            <person name="Celniker S.E."/>
            <person name="de Grey A.D.N.J."/>
            <person name="Drysdale R.A."/>
            <person name="Harris N.L."/>
            <person name="Richter J."/>
            <person name="Russo S."/>
            <person name="Schroeder A.J."/>
            <person name="Shu S.Q."/>
            <person name="Stapleton M."/>
            <person name="Yamada C."/>
            <person name="Ashburner M."/>
            <person name="Gelbart W.M."/>
            <person name="Rubin G.M."/>
            <person name="Lewis S.E."/>
        </authorList>
    </citation>
    <scope>GENOME REANNOTATION</scope>
    <source>
        <strain>Berkeley</strain>
    </source>
</reference>
<reference key="3">
    <citation type="journal article" date="2002" name="Genome Biol.">
        <title>A Drosophila full-length cDNA resource.</title>
        <authorList>
            <person name="Stapleton M."/>
            <person name="Carlson J.W."/>
            <person name="Brokstein P."/>
            <person name="Yu C."/>
            <person name="Champe M."/>
            <person name="George R.A."/>
            <person name="Guarin H."/>
            <person name="Kronmiller B."/>
            <person name="Pacleb J.M."/>
            <person name="Park S."/>
            <person name="Wan K.H."/>
            <person name="Rubin G.M."/>
            <person name="Celniker S.E."/>
        </authorList>
    </citation>
    <scope>NUCLEOTIDE SEQUENCE [LARGE SCALE MRNA] (ISOFORM A)</scope>
    <source>
        <strain>Berkeley</strain>
        <tissue>Head</tissue>
    </source>
</reference>
<reference key="4">
    <citation type="journal article" date="2018" name="Genes Dev.">
        <title>Zc3h13/Flacc is required for adenosine methylation by bridging the mRNA-binding factor Rbm15/Spenito to the m6A machinery component Wtap/Fl(2)d.</title>
        <authorList>
            <person name="Knuckles P."/>
            <person name="Lence T."/>
            <person name="Haussmann I.U."/>
            <person name="Jacob D."/>
            <person name="Kreim N."/>
            <person name="Carl S.H."/>
            <person name="Masiello I."/>
            <person name="Hares T."/>
            <person name="Villasenor R."/>
            <person name="Hess D."/>
            <person name="Andrade-Navarro M.A."/>
            <person name="Biggiogera M."/>
            <person name="Helm M."/>
            <person name="Soller M."/>
            <person name="Buehler M."/>
            <person name="Roignant J.Y."/>
        </authorList>
    </citation>
    <scope>FUNCTION</scope>
    <scope>SUBCELLULAR LOCATION</scope>
    <scope>TISSUE SPECIFICITY</scope>
    <scope>DEVELOPMENTAL STAGE</scope>
    <scope>IDENTIFICATION IN THE WMM COMPLEX</scope>
</reference>
<reference key="5">
    <citation type="journal article" date="2018" name="Proc. Natl. Acad. Sci. U.S.A.">
        <title>Xio is a component of the Drosophila sex determination pathway and RNA N6-methyladenosine-methyladenosine methyltransferase complex.</title>
        <authorList>
            <person name="Guo J."/>
            <person name="Tang H.W."/>
            <person name="Li J."/>
            <person name="Perrimon N."/>
            <person name="Yan D."/>
        </authorList>
    </citation>
    <scope>FUNCTION</scope>
    <scope>SUBCELLULAR LOCATION</scope>
    <scope>DEVELOPMENTAL STAGE</scope>
    <scope>IDENTIFICATION IN THE WMM COMPLEX</scope>
    <scope>DISRUPTION PHENOTYPE</scope>
</reference>
<keyword id="KW-0025">Alternative splicing</keyword>
<keyword id="KW-0175">Coiled coil</keyword>
<keyword id="KW-0217">Developmental protein</keyword>
<keyword id="KW-0221">Differentiation</keyword>
<keyword id="KW-0507">mRNA processing</keyword>
<keyword id="KW-0508">mRNA splicing</keyword>
<keyword id="KW-0539">Nucleus</keyword>
<keyword id="KW-1185">Reference proteome</keyword>
<keyword id="KW-0726">Sexual differentiation</keyword>
<evidence type="ECO:0000255" key="1"/>
<evidence type="ECO:0000256" key="2">
    <source>
        <dbReference type="SAM" id="MobiDB-lite"/>
    </source>
</evidence>
<evidence type="ECO:0000269" key="3">
    <source>
    </source>
</evidence>
<evidence type="ECO:0000269" key="4">
    <source>
    </source>
</evidence>
<evidence type="ECO:0000303" key="5">
    <source>
    </source>
</evidence>
<evidence type="ECO:0000303" key="6">
    <source>
    </source>
</evidence>
<evidence type="ECO:0000305" key="7"/>
<evidence type="ECO:0000312" key="8">
    <source>
        <dbReference type="FlyBase" id="FBgn0030974"/>
    </source>
</evidence>
<organism>
    <name type="scientific">Drosophila melanogaster</name>
    <name type="common">Fruit fly</name>
    <dbReference type="NCBI Taxonomy" id="7227"/>
    <lineage>
        <taxon>Eukaryota</taxon>
        <taxon>Metazoa</taxon>
        <taxon>Ecdysozoa</taxon>
        <taxon>Arthropoda</taxon>
        <taxon>Hexapoda</taxon>
        <taxon>Insecta</taxon>
        <taxon>Pterygota</taxon>
        <taxon>Neoptera</taxon>
        <taxon>Endopterygota</taxon>
        <taxon>Diptera</taxon>
        <taxon>Brachycera</taxon>
        <taxon>Muscomorpha</taxon>
        <taxon>Ephydroidea</taxon>
        <taxon>Drosophilidae</taxon>
        <taxon>Drosophila</taxon>
        <taxon>Sophophora</taxon>
    </lineage>
</organism>
<name>FLACC_DROME</name>
<protein>
    <recommendedName>
        <fullName evidence="5">Fl(2)d-associated complex component</fullName>
    </recommendedName>
    <alternativeName>
        <fullName evidence="6">Protein Xiong</fullName>
    </alternativeName>
</protein>
<gene>
    <name evidence="5" type="primary">Flacc</name>
    <name evidence="6" type="synonym">Xio</name>
    <name evidence="8" type="ORF">CG7358</name>
</gene>
<comment type="function">
    <text evidence="3 4">Associated component of the WMM complex, a complex that mediates N6-methyladenosine (m6A) methylation of mRNAs, a modification that plays a role in the efficiency of mRNA splicing and is required for sex determination (PubMed:29535189, PubMed:29555755). In the WMM complex, acts as a key regulator of m6A methylation by bridging fl(2)d to the RNA-binding component nito (PubMed:29535189). Required for sex determination and dosage compensation via Sxl alternative splicing: m6A methylation acts as a key regulator of Sxl pre-mRNA and promotes female-specific alternative splicing of Sxl, which determines female physiognomy (PubMed:29535189, PubMed:29555755).</text>
</comment>
<comment type="subunit">
    <text evidence="3 4">Component of the WMM complex, a N6-methyltransferase complex composed of a catalytic subcomplex, named MAC, and of an associated subcomplex, named MACOM (PubMed:29535189, PubMed:29555755). The MAC subcomplex is composed of Ime4/Mettl3 and Mettl14 (PubMed:29535189, PubMed:29555755). The MACOM subcomplex is composed of fl(2)d, Flacc/Xio, Hakai, vir, and, in some cases of nito (PubMed:29535189, PubMed:29555755).</text>
</comment>
<comment type="interaction">
    <interactant intactId="EBI-2509071">
        <id>Q9VWN4</id>
    </interactant>
    <interactant intactId="EBI-101869">
        <id>Q9Y091</id>
        <label>fl(2)d</label>
    </interactant>
    <organismsDiffer>false</organismsDiffer>
    <experiments>4</experiments>
</comment>
<comment type="subcellular location">
    <subcellularLocation>
        <location evidence="3 4">Nucleus</location>
    </subcellularLocation>
</comment>
<comment type="alternative products">
    <event type="alternative splicing"/>
    <isoform>
        <id>Q9VWN4-1</id>
        <name>A</name>
        <sequence type="displayed"/>
    </isoform>
    <isoform>
        <id>Q9VWN4-2</id>
        <name>B</name>
        <sequence type="described" ref="VSP_059626"/>
    </isoform>
    <isoform>
        <id>Q9VWN4-3</id>
        <name>C</name>
        <sequence type="described" ref="VSP_059627 VSP_059628"/>
    </isoform>
</comment>
<comment type="tissue specificity">
    <text evidence="3">Widely expressed during embryogenesis but shows enrichment in the neuroectoderm.</text>
</comment>
<comment type="developmental stage">
    <text evidence="3 4">Expression is enriched in early embryos, decreases during larval stages, and rises again at pupal stages (PubMed:29555755). Strongly expressed during the maternal-to-zygotic transition, a time where N6-methyladenosine (m6A) methylation of mRNAs is decreasing (PubMed:29535189).</text>
</comment>
<comment type="disruption phenotype">
    <text evidence="4">Female-specific lethality, associated with sexual transformation phenotypes (PubMed:29555755). Hemizygous males are sterile (PubMed:29555755). Sexual transformation phenotypes resemble other N6-methyladenosine (m6A) factors, such as sexual transformations, Sxl splicing defect, held-out wings, flightless flies and reduction of m6A levels (PubMed:29555755).</text>
</comment>
<comment type="miscellaneous">
    <text evidence="4">Was named Xiong after the Chinese character for maleness.</text>
</comment>
<comment type="similarity">
    <text evidence="7">Belongs to the ZC3H13 family.</text>
</comment>
<accession>Q9VWN4</accession>
<accession>X2JFQ1</accession>
<accession>X2JG10</accession>
<feature type="chain" id="PRO_0000444613" description="Fl(2)d-associated complex component">
    <location>
        <begin position="1"/>
        <end position="1150"/>
    </location>
</feature>
<feature type="region of interest" description="Disordered" evidence="2">
    <location>
        <begin position="1"/>
        <end position="444"/>
    </location>
</feature>
<feature type="region of interest" description="Disordered" evidence="2">
    <location>
        <begin position="477"/>
        <end position="710"/>
    </location>
</feature>
<feature type="region of interest" description="Disordered" evidence="2">
    <location>
        <begin position="833"/>
        <end position="914"/>
    </location>
</feature>
<feature type="region of interest" description="Disordered" evidence="2">
    <location>
        <begin position="1034"/>
        <end position="1053"/>
    </location>
</feature>
<feature type="coiled-coil region" evidence="1">
    <location>
        <begin position="122"/>
        <end position="147"/>
    </location>
</feature>
<feature type="coiled-coil region" evidence="1">
    <location>
        <begin position="269"/>
        <end position="347"/>
    </location>
</feature>
<feature type="compositionally biased region" description="Basic and acidic residues" evidence="2">
    <location>
        <begin position="1"/>
        <end position="10"/>
    </location>
</feature>
<feature type="compositionally biased region" description="Basic residues" evidence="2">
    <location>
        <begin position="11"/>
        <end position="20"/>
    </location>
</feature>
<feature type="compositionally biased region" description="Low complexity" evidence="2">
    <location>
        <begin position="21"/>
        <end position="44"/>
    </location>
</feature>
<feature type="compositionally biased region" description="Gly residues" evidence="2">
    <location>
        <begin position="47"/>
        <end position="69"/>
    </location>
</feature>
<feature type="compositionally biased region" description="Basic residues" evidence="2">
    <location>
        <begin position="72"/>
        <end position="97"/>
    </location>
</feature>
<feature type="compositionally biased region" description="Low complexity" evidence="2">
    <location>
        <begin position="98"/>
        <end position="107"/>
    </location>
</feature>
<feature type="compositionally biased region" description="Basic residues" evidence="2">
    <location>
        <begin position="110"/>
        <end position="144"/>
    </location>
</feature>
<feature type="compositionally biased region" description="Basic residues" evidence="2">
    <location>
        <begin position="162"/>
        <end position="175"/>
    </location>
</feature>
<feature type="compositionally biased region" description="Basic and acidic residues" evidence="2">
    <location>
        <begin position="176"/>
        <end position="199"/>
    </location>
</feature>
<feature type="compositionally biased region" description="Low complexity" evidence="2">
    <location>
        <begin position="202"/>
        <end position="215"/>
    </location>
</feature>
<feature type="compositionally biased region" description="Basic and acidic residues" evidence="2">
    <location>
        <begin position="270"/>
        <end position="414"/>
    </location>
</feature>
<feature type="compositionally biased region" description="Basic and acidic residues" evidence="2">
    <location>
        <begin position="428"/>
        <end position="444"/>
    </location>
</feature>
<feature type="compositionally biased region" description="Basic and acidic residues" evidence="2">
    <location>
        <begin position="492"/>
        <end position="529"/>
    </location>
</feature>
<feature type="compositionally biased region" description="Gly residues" evidence="2">
    <location>
        <begin position="537"/>
        <end position="558"/>
    </location>
</feature>
<feature type="compositionally biased region" description="Basic and acidic residues" evidence="2">
    <location>
        <begin position="589"/>
        <end position="611"/>
    </location>
</feature>
<feature type="compositionally biased region" description="Basic and acidic residues" evidence="2">
    <location>
        <begin position="630"/>
        <end position="640"/>
    </location>
</feature>
<feature type="compositionally biased region" description="Pro residues" evidence="2">
    <location>
        <begin position="660"/>
        <end position="669"/>
    </location>
</feature>
<feature type="compositionally biased region" description="Basic and acidic residues" evidence="2">
    <location>
        <begin position="693"/>
        <end position="702"/>
    </location>
</feature>
<feature type="compositionally biased region" description="Low complexity" evidence="2">
    <location>
        <begin position="851"/>
        <end position="861"/>
    </location>
</feature>
<feature type="compositionally biased region" description="Acidic residues" evidence="2">
    <location>
        <begin position="879"/>
        <end position="889"/>
    </location>
</feature>
<feature type="compositionally biased region" description="Basic and acidic residues" evidence="2">
    <location>
        <begin position="890"/>
        <end position="903"/>
    </location>
</feature>
<feature type="compositionally biased region" description="Acidic residues" evidence="2">
    <location>
        <begin position="905"/>
        <end position="914"/>
    </location>
</feature>
<feature type="splice variant" id="VSP_059626" description="In isoform B.">
    <location>
        <begin position="820"/>
        <end position="830"/>
    </location>
</feature>
<feature type="splice variant" id="VSP_059627" description="In isoform C.">
    <original>SKLNTVCIKQEDASEDSAGTPE</original>
    <variation>RLIFVYFAAETSDAAYHIIWRQ</variation>
    <location>
        <begin position="821"/>
        <end position="842"/>
    </location>
</feature>
<feature type="splice variant" id="VSP_059628" description="In isoform C.">
    <location>
        <begin position="843"/>
        <end position="1150"/>
    </location>
</feature>